<organism>
    <name type="scientific">Escherichia coli O7:K1 (strain IAI39 / ExPEC)</name>
    <dbReference type="NCBI Taxonomy" id="585057"/>
    <lineage>
        <taxon>Bacteria</taxon>
        <taxon>Pseudomonadati</taxon>
        <taxon>Pseudomonadota</taxon>
        <taxon>Gammaproteobacteria</taxon>
        <taxon>Enterobacterales</taxon>
        <taxon>Enterobacteriaceae</taxon>
        <taxon>Escherichia</taxon>
    </lineage>
</organism>
<accession>B7NSA5</accession>
<protein>
    <recommendedName>
        <fullName evidence="1">Large ribosomal subunit protein bL19</fullName>
    </recommendedName>
    <alternativeName>
        <fullName evidence="2">50S ribosomal protein L19</fullName>
    </alternativeName>
</protein>
<gene>
    <name evidence="1" type="primary">rplS</name>
    <name type="ordered locus">ECIAI39_2810</name>
</gene>
<reference key="1">
    <citation type="journal article" date="2009" name="PLoS Genet.">
        <title>Organised genome dynamics in the Escherichia coli species results in highly diverse adaptive paths.</title>
        <authorList>
            <person name="Touchon M."/>
            <person name="Hoede C."/>
            <person name="Tenaillon O."/>
            <person name="Barbe V."/>
            <person name="Baeriswyl S."/>
            <person name="Bidet P."/>
            <person name="Bingen E."/>
            <person name="Bonacorsi S."/>
            <person name="Bouchier C."/>
            <person name="Bouvet O."/>
            <person name="Calteau A."/>
            <person name="Chiapello H."/>
            <person name="Clermont O."/>
            <person name="Cruveiller S."/>
            <person name="Danchin A."/>
            <person name="Diard M."/>
            <person name="Dossat C."/>
            <person name="Karoui M.E."/>
            <person name="Frapy E."/>
            <person name="Garry L."/>
            <person name="Ghigo J.M."/>
            <person name="Gilles A.M."/>
            <person name="Johnson J."/>
            <person name="Le Bouguenec C."/>
            <person name="Lescat M."/>
            <person name="Mangenot S."/>
            <person name="Martinez-Jehanne V."/>
            <person name="Matic I."/>
            <person name="Nassif X."/>
            <person name="Oztas S."/>
            <person name="Petit M.A."/>
            <person name="Pichon C."/>
            <person name="Rouy Z."/>
            <person name="Ruf C.S."/>
            <person name="Schneider D."/>
            <person name="Tourret J."/>
            <person name="Vacherie B."/>
            <person name="Vallenet D."/>
            <person name="Medigue C."/>
            <person name="Rocha E.P.C."/>
            <person name="Denamur E."/>
        </authorList>
    </citation>
    <scope>NUCLEOTIDE SEQUENCE [LARGE SCALE GENOMIC DNA]</scope>
    <source>
        <strain>IAI39 / ExPEC</strain>
    </source>
</reference>
<dbReference type="EMBL" id="CU928164">
    <property type="protein sequence ID" value="CAR18932.1"/>
    <property type="molecule type" value="Genomic_DNA"/>
</dbReference>
<dbReference type="RefSeq" id="WP_000065253.1">
    <property type="nucleotide sequence ID" value="NC_011750.1"/>
</dbReference>
<dbReference type="RefSeq" id="YP_002408747.1">
    <property type="nucleotide sequence ID" value="NC_011750.1"/>
</dbReference>
<dbReference type="SMR" id="B7NSA5"/>
<dbReference type="STRING" id="585057.ECIAI39_2810"/>
<dbReference type="GeneID" id="93774456"/>
<dbReference type="KEGG" id="ect:ECIAI39_2810"/>
<dbReference type="PATRIC" id="fig|585057.6.peg.2917"/>
<dbReference type="HOGENOM" id="CLU_103507_2_1_6"/>
<dbReference type="Proteomes" id="UP000000749">
    <property type="component" value="Chromosome"/>
</dbReference>
<dbReference type="GO" id="GO:0022625">
    <property type="term" value="C:cytosolic large ribosomal subunit"/>
    <property type="evidence" value="ECO:0007669"/>
    <property type="project" value="TreeGrafter"/>
</dbReference>
<dbReference type="GO" id="GO:0003735">
    <property type="term" value="F:structural constituent of ribosome"/>
    <property type="evidence" value="ECO:0007669"/>
    <property type="project" value="InterPro"/>
</dbReference>
<dbReference type="GO" id="GO:0006412">
    <property type="term" value="P:translation"/>
    <property type="evidence" value="ECO:0007669"/>
    <property type="project" value="UniProtKB-UniRule"/>
</dbReference>
<dbReference type="FunFam" id="2.30.30.790:FF:000001">
    <property type="entry name" value="50S ribosomal protein L19"/>
    <property type="match status" value="1"/>
</dbReference>
<dbReference type="Gene3D" id="2.30.30.790">
    <property type="match status" value="1"/>
</dbReference>
<dbReference type="HAMAP" id="MF_00402">
    <property type="entry name" value="Ribosomal_bL19"/>
    <property type="match status" value="1"/>
</dbReference>
<dbReference type="InterPro" id="IPR001857">
    <property type="entry name" value="Ribosomal_bL19"/>
</dbReference>
<dbReference type="InterPro" id="IPR018257">
    <property type="entry name" value="Ribosomal_bL19_CS"/>
</dbReference>
<dbReference type="InterPro" id="IPR038657">
    <property type="entry name" value="Ribosomal_bL19_sf"/>
</dbReference>
<dbReference type="InterPro" id="IPR008991">
    <property type="entry name" value="Translation_prot_SH3-like_sf"/>
</dbReference>
<dbReference type="NCBIfam" id="TIGR01024">
    <property type="entry name" value="rplS_bact"/>
    <property type="match status" value="1"/>
</dbReference>
<dbReference type="PANTHER" id="PTHR15680:SF9">
    <property type="entry name" value="LARGE RIBOSOMAL SUBUNIT PROTEIN BL19M"/>
    <property type="match status" value="1"/>
</dbReference>
<dbReference type="PANTHER" id="PTHR15680">
    <property type="entry name" value="RIBOSOMAL PROTEIN L19"/>
    <property type="match status" value="1"/>
</dbReference>
<dbReference type="Pfam" id="PF01245">
    <property type="entry name" value="Ribosomal_L19"/>
    <property type="match status" value="1"/>
</dbReference>
<dbReference type="PIRSF" id="PIRSF002191">
    <property type="entry name" value="Ribosomal_L19"/>
    <property type="match status" value="1"/>
</dbReference>
<dbReference type="PRINTS" id="PR00061">
    <property type="entry name" value="RIBOSOMALL19"/>
</dbReference>
<dbReference type="SUPFAM" id="SSF50104">
    <property type="entry name" value="Translation proteins SH3-like domain"/>
    <property type="match status" value="1"/>
</dbReference>
<dbReference type="PROSITE" id="PS01015">
    <property type="entry name" value="RIBOSOMAL_L19"/>
    <property type="match status" value="1"/>
</dbReference>
<comment type="function">
    <text evidence="1">This protein is located at the 30S-50S ribosomal subunit interface and may play a role in the structure and function of the aminoacyl-tRNA binding site.</text>
</comment>
<comment type="similarity">
    <text evidence="1">Belongs to the bacterial ribosomal protein bL19 family.</text>
</comment>
<keyword id="KW-0687">Ribonucleoprotein</keyword>
<keyword id="KW-0689">Ribosomal protein</keyword>
<evidence type="ECO:0000255" key="1">
    <source>
        <dbReference type="HAMAP-Rule" id="MF_00402"/>
    </source>
</evidence>
<evidence type="ECO:0000305" key="2"/>
<feature type="chain" id="PRO_1000193837" description="Large ribosomal subunit protein bL19">
    <location>
        <begin position="1"/>
        <end position="115"/>
    </location>
</feature>
<proteinExistence type="inferred from homology"/>
<sequence>MSNIIKQLEQEQMKQDVPSFRPGDTVEVKVWVVEGSKKRLQAFEGVVIAIRNRGLHSAFTVRKISNGEGVERVFQTHSPVVDSISVKRRGAVRKAKLYYLRERTGKAARIKERLN</sequence>
<name>RL19_ECO7I</name>